<name>DEF_ALKEH</name>
<dbReference type="EC" id="3.5.1.88" evidence="1"/>
<dbReference type="EMBL" id="CP000453">
    <property type="protein sequence ID" value="ABI57968.1"/>
    <property type="molecule type" value="Genomic_DNA"/>
</dbReference>
<dbReference type="RefSeq" id="WP_011630361.1">
    <property type="nucleotide sequence ID" value="NC_008340.1"/>
</dbReference>
<dbReference type="SMR" id="Q0A5B9"/>
<dbReference type="KEGG" id="aeh:Mlg_2628"/>
<dbReference type="eggNOG" id="COG0242">
    <property type="taxonomic scope" value="Bacteria"/>
</dbReference>
<dbReference type="HOGENOM" id="CLU_061901_2_1_6"/>
<dbReference type="OrthoDB" id="9804313at2"/>
<dbReference type="Proteomes" id="UP000001962">
    <property type="component" value="Chromosome"/>
</dbReference>
<dbReference type="GO" id="GO:0046872">
    <property type="term" value="F:metal ion binding"/>
    <property type="evidence" value="ECO:0007669"/>
    <property type="project" value="UniProtKB-KW"/>
</dbReference>
<dbReference type="GO" id="GO:0042586">
    <property type="term" value="F:peptide deformylase activity"/>
    <property type="evidence" value="ECO:0007669"/>
    <property type="project" value="UniProtKB-UniRule"/>
</dbReference>
<dbReference type="GO" id="GO:0043686">
    <property type="term" value="P:co-translational protein modification"/>
    <property type="evidence" value="ECO:0007669"/>
    <property type="project" value="TreeGrafter"/>
</dbReference>
<dbReference type="GO" id="GO:0006412">
    <property type="term" value="P:translation"/>
    <property type="evidence" value="ECO:0007669"/>
    <property type="project" value="UniProtKB-UniRule"/>
</dbReference>
<dbReference type="CDD" id="cd00487">
    <property type="entry name" value="Pep_deformylase"/>
    <property type="match status" value="1"/>
</dbReference>
<dbReference type="FunFam" id="3.90.45.10:FF:000001">
    <property type="entry name" value="Peptide deformylase"/>
    <property type="match status" value="1"/>
</dbReference>
<dbReference type="Gene3D" id="3.90.45.10">
    <property type="entry name" value="Peptide deformylase"/>
    <property type="match status" value="1"/>
</dbReference>
<dbReference type="HAMAP" id="MF_00163">
    <property type="entry name" value="Pep_deformylase"/>
    <property type="match status" value="1"/>
</dbReference>
<dbReference type="InterPro" id="IPR023635">
    <property type="entry name" value="Peptide_deformylase"/>
</dbReference>
<dbReference type="InterPro" id="IPR036821">
    <property type="entry name" value="Peptide_deformylase_sf"/>
</dbReference>
<dbReference type="NCBIfam" id="TIGR00079">
    <property type="entry name" value="pept_deformyl"/>
    <property type="match status" value="1"/>
</dbReference>
<dbReference type="NCBIfam" id="NF001159">
    <property type="entry name" value="PRK00150.1-3"/>
    <property type="match status" value="1"/>
</dbReference>
<dbReference type="PANTHER" id="PTHR10458">
    <property type="entry name" value="PEPTIDE DEFORMYLASE"/>
    <property type="match status" value="1"/>
</dbReference>
<dbReference type="PANTHER" id="PTHR10458:SF22">
    <property type="entry name" value="PEPTIDE DEFORMYLASE"/>
    <property type="match status" value="1"/>
</dbReference>
<dbReference type="Pfam" id="PF01327">
    <property type="entry name" value="Pep_deformylase"/>
    <property type="match status" value="1"/>
</dbReference>
<dbReference type="PIRSF" id="PIRSF004749">
    <property type="entry name" value="Pep_def"/>
    <property type="match status" value="1"/>
</dbReference>
<dbReference type="PRINTS" id="PR01576">
    <property type="entry name" value="PDEFORMYLASE"/>
</dbReference>
<dbReference type="SUPFAM" id="SSF56420">
    <property type="entry name" value="Peptide deformylase"/>
    <property type="match status" value="1"/>
</dbReference>
<evidence type="ECO:0000255" key="1">
    <source>
        <dbReference type="HAMAP-Rule" id="MF_00163"/>
    </source>
</evidence>
<protein>
    <recommendedName>
        <fullName evidence="1">Peptide deformylase</fullName>
        <shortName evidence="1">PDF</shortName>
        <ecNumber evidence="1">3.5.1.88</ecNumber>
    </recommendedName>
    <alternativeName>
        <fullName evidence="1">Polypeptide deformylase</fullName>
    </alternativeName>
</protein>
<sequence length="178" mass="20034">MAILDILVYPDPRLREVAAPVAQVDDDIRRLADDMLETMYDAQGIGLAATQVGVNQRVVVMDLAEEGARQPLVLINPEILDREGAATGQEGCLSIPGFYEDVERAERIRFRALDREGRPWEQEAEGLMAVCVQHEIDHLDGKLFVDYLSELKRKRIRRKLEKLVRQGRVNVGGQTGRA</sequence>
<proteinExistence type="inferred from homology"/>
<reference key="1">
    <citation type="submission" date="2006-08" db="EMBL/GenBank/DDBJ databases">
        <title>Complete sequence of Alkalilimnicola ehrilichei MLHE-1.</title>
        <authorList>
            <person name="Copeland A."/>
            <person name="Lucas S."/>
            <person name="Lapidus A."/>
            <person name="Barry K."/>
            <person name="Detter J.C."/>
            <person name="Glavina del Rio T."/>
            <person name="Hammon N."/>
            <person name="Israni S."/>
            <person name="Dalin E."/>
            <person name="Tice H."/>
            <person name="Pitluck S."/>
            <person name="Sims D."/>
            <person name="Brettin T."/>
            <person name="Bruce D."/>
            <person name="Han C."/>
            <person name="Tapia R."/>
            <person name="Gilna P."/>
            <person name="Schmutz J."/>
            <person name="Larimer F."/>
            <person name="Land M."/>
            <person name="Hauser L."/>
            <person name="Kyrpides N."/>
            <person name="Mikhailova N."/>
            <person name="Oremland R.S."/>
            <person name="Hoeft S.E."/>
            <person name="Switzer-Blum J."/>
            <person name="Kulp T."/>
            <person name="King G."/>
            <person name="Tabita R."/>
            <person name="Witte B."/>
            <person name="Santini J.M."/>
            <person name="Basu P."/>
            <person name="Hollibaugh J.T."/>
            <person name="Xie G."/>
            <person name="Stolz J.F."/>
            <person name="Richardson P."/>
        </authorList>
    </citation>
    <scope>NUCLEOTIDE SEQUENCE [LARGE SCALE GENOMIC DNA]</scope>
    <source>
        <strain>ATCC BAA-1101 / DSM 17681 / MLHE-1</strain>
    </source>
</reference>
<comment type="function">
    <text evidence="1">Removes the formyl group from the N-terminal Met of newly synthesized proteins. Requires at least a dipeptide for an efficient rate of reaction. N-terminal L-methionine is a prerequisite for activity but the enzyme has broad specificity at other positions.</text>
</comment>
<comment type="catalytic activity">
    <reaction evidence="1">
        <text>N-terminal N-formyl-L-methionyl-[peptide] + H2O = N-terminal L-methionyl-[peptide] + formate</text>
        <dbReference type="Rhea" id="RHEA:24420"/>
        <dbReference type="Rhea" id="RHEA-COMP:10639"/>
        <dbReference type="Rhea" id="RHEA-COMP:10640"/>
        <dbReference type="ChEBI" id="CHEBI:15377"/>
        <dbReference type="ChEBI" id="CHEBI:15740"/>
        <dbReference type="ChEBI" id="CHEBI:49298"/>
        <dbReference type="ChEBI" id="CHEBI:64731"/>
        <dbReference type="EC" id="3.5.1.88"/>
    </reaction>
</comment>
<comment type="cofactor">
    <cofactor evidence="1">
        <name>Fe(2+)</name>
        <dbReference type="ChEBI" id="CHEBI:29033"/>
    </cofactor>
    <text evidence="1">Binds 1 Fe(2+) ion.</text>
</comment>
<comment type="similarity">
    <text evidence="1">Belongs to the polypeptide deformylase family.</text>
</comment>
<keyword id="KW-0378">Hydrolase</keyword>
<keyword id="KW-0408">Iron</keyword>
<keyword id="KW-0479">Metal-binding</keyword>
<keyword id="KW-0648">Protein biosynthesis</keyword>
<keyword id="KW-1185">Reference proteome</keyword>
<accession>Q0A5B9</accession>
<feature type="chain" id="PRO_0000301001" description="Peptide deformylase">
    <location>
        <begin position="1"/>
        <end position="178"/>
    </location>
</feature>
<feature type="active site" evidence="1">
    <location>
        <position position="135"/>
    </location>
</feature>
<feature type="binding site" evidence="1">
    <location>
        <position position="92"/>
    </location>
    <ligand>
        <name>Fe cation</name>
        <dbReference type="ChEBI" id="CHEBI:24875"/>
    </ligand>
</feature>
<feature type="binding site" evidence="1">
    <location>
        <position position="134"/>
    </location>
    <ligand>
        <name>Fe cation</name>
        <dbReference type="ChEBI" id="CHEBI:24875"/>
    </ligand>
</feature>
<feature type="binding site" evidence="1">
    <location>
        <position position="138"/>
    </location>
    <ligand>
        <name>Fe cation</name>
        <dbReference type="ChEBI" id="CHEBI:24875"/>
    </ligand>
</feature>
<organism>
    <name type="scientific">Alkalilimnicola ehrlichii (strain ATCC BAA-1101 / DSM 17681 / MLHE-1)</name>
    <dbReference type="NCBI Taxonomy" id="187272"/>
    <lineage>
        <taxon>Bacteria</taxon>
        <taxon>Pseudomonadati</taxon>
        <taxon>Pseudomonadota</taxon>
        <taxon>Gammaproteobacteria</taxon>
        <taxon>Chromatiales</taxon>
        <taxon>Ectothiorhodospiraceae</taxon>
        <taxon>Alkalilimnicola</taxon>
    </lineage>
</organism>
<gene>
    <name evidence="1" type="primary">def</name>
    <name type="ordered locus">Mlg_2628</name>
</gene>